<gene>
    <name evidence="1" type="primary">pckA</name>
    <name type="ordered locus">LEPBI_I2989</name>
</gene>
<name>PCKA_LEPBP</name>
<sequence length="530" mass="59348">MSVSTNLKGLAELGLKPSEVFHNLSYEEIYQHELNNKEGVTSDNGTMMVDTGIFTGRSPKDKYFVDEPSSQNNIWWGPVNTKVSEAIFNELYAEVTKFLDNKKLYVFDGHAGTNDDTRISLRVVTERAWQHHFCTNMFLRPTKEELAKLDPEFTIINASGYKNPKYKEHGLNSEVFVIFHLAKKICIIGGTEYGGEMKKGIFSVMNYYLPLKNVLTMHCSANVGKDGDSALFFGLSGTGKTTLSTDPNRKLIGDDEHGWDDNGIFNIEGGCYAKTINLDPKTEPEIYAAIRRDALLENVVYDATTKKVDYSSAAKTENTRVSYPIFHIDNIQPGSKAGHPNTVIFLTYDAYGVLPAVSKLSIEQAMYHFLSGYTAKVAGTERGVKEPQATFSACFGQAFMTLHPTYYAKLLGEKMKKHQVNAYLINTGLVGGKYGVGKRMNLPATRQIINEILNGNIEKSEFEKHPVFQVSFPKSVNGVDAHILNPRNAWENKEDYDKTAADLAKQFVENYKKYLTGSKEFDYSQYGPIA</sequence>
<reference key="1">
    <citation type="journal article" date="2008" name="PLoS ONE">
        <title>Genome sequence of the saprophyte Leptospira biflexa provides insights into the evolution of Leptospira and the pathogenesis of leptospirosis.</title>
        <authorList>
            <person name="Picardeau M."/>
            <person name="Bulach D.M."/>
            <person name="Bouchier C."/>
            <person name="Zuerner R.L."/>
            <person name="Zidane N."/>
            <person name="Wilson P.J."/>
            <person name="Creno S."/>
            <person name="Kuczek E.S."/>
            <person name="Bommezzadri S."/>
            <person name="Davis J.C."/>
            <person name="McGrath A."/>
            <person name="Johnson M.J."/>
            <person name="Boursaux-Eude C."/>
            <person name="Seemann T."/>
            <person name="Rouy Z."/>
            <person name="Coppel R.L."/>
            <person name="Rood J.I."/>
            <person name="Lajus A."/>
            <person name="Davies J.K."/>
            <person name="Medigue C."/>
            <person name="Adler B."/>
        </authorList>
    </citation>
    <scope>NUCLEOTIDE SEQUENCE [LARGE SCALE GENOMIC DNA]</scope>
    <source>
        <strain>Patoc 1 / ATCC 23582 / Paris</strain>
    </source>
</reference>
<organism>
    <name type="scientific">Leptospira biflexa serovar Patoc (strain Patoc 1 / ATCC 23582 / Paris)</name>
    <dbReference type="NCBI Taxonomy" id="456481"/>
    <lineage>
        <taxon>Bacteria</taxon>
        <taxon>Pseudomonadati</taxon>
        <taxon>Spirochaetota</taxon>
        <taxon>Spirochaetia</taxon>
        <taxon>Leptospirales</taxon>
        <taxon>Leptospiraceae</taxon>
        <taxon>Leptospira</taxon>
    </lineage>
</organism>
<protein>
    <recommendedName>
        <fullName evidence="1">Phosphoenolpyruvate carboxykinase (ATP)</fullName>
        <shortName evidence="1">PCK</shortName>
        <shortName evidence="1">PEP carboxykinase</shortName>
        <shortName evidence="1">PEPCK</shortName>
        <ecNumber evidence="1">4.1.1.49</ecNumber>
    </recommendedName>
</protein>
<feature type="chain" id="PRO_1000125071" description="Phosphoenolpyruvate carboxykinase (ATP)">
    <location>
        <begin position="1"/>
        <end position="530"/>
    </location>
</feature>
<feature type="binding site" evidence="1">
    <location>
        <position position="57"/>
    </location>
    <ligand>
        <name>substrate</name>
    </ligand>
</feature>
<feature type="binding site" evidence="1">
    <location>
        <position position="193"/>
    </location>
    <ligand>
        <name>substrate</name>
    </ligand>
</feature>
<feature type="binding site" evidence="1">
    <location>
        <position position="199"/>
    </location>
    <ligand>
        <name>ATP</name>
        <dbReference type="ChEBI" id="CHEBI:30616"/>
    </ligand>
</feature>
<feature type="binding site" evidence="1">
    <location>
        <position position="199"/>
    </location>
    <ligand>
        <name>Mn(2+)</name>
        <dbReference type="ChEBI" id="CHEBI:29035"/>
    </ligand>
</feature>
<feature type="binding site" evidence="1">
    <location>
        <position position="199"/>
    </location>
    <ligand>
        <name>substrate</name>
    </ligand>
</feature>
<feature type="binding site" evidence="1">
    <location>
        <position position="218"/>
    </location>
    <ligand>
        <name>ATP</name>
        <dbReference type="ChEBI" id="CHEBI:30616"/>
    </ligand>
</feature>
<feature type="binding site" evidence="1">
    <location>
        <position position="218"/>
    </location>
    <ligand>
        <name>Mn(2+)</name>
        <dbReference type="ChEBI" id="CHEBI:29035"/>
    </ligand>
</feature>
<feature type="binding site" evidence="1">
    <location>
        <begin position="234"/>
        <end position="242"/>
    </location>
    <ligand>
        <name>ATP</name>
        <dbReference type="ChEBI" id="CHEBI:30616"/>
    </ligand>
</feature>
<feature type="binding site" evidence="1">
    <location>
        <position position="255"/>
    </location>
    <ligand>
        <name>Mn(2+)</name>
        <dbReference type="ChEBI" id="CHEBI:29035"/>
    </ligand>
</feature>
<feature type="binding site" evidence="1">
    <location>
        <position position="283"/>
    </location>
    <ligand>
        <name>ATP</name>
        <dbReference type="ChEBI" id="CHEBI:30616"/>
    </ligand>
</feature>
<feature type="binding site" evidence="1">
    <location>
        <position position="320"/>
    </location>
    <ligand>
        <name>ATP</name>
        <dbReference type="ChEBI" id="CHEBI:30616"/>
    </ligand>
</feature>
<feature type="binding site" evidence="1">
    <location>
        <position position="320"/>
    </location>
    <ligand>
        <name>substrate</name>
    </ligand>
</feature>
<feature type="binding site" evidence="1">
    <location>
        <position position="445"/>
    </location>
    <ligand>
        <name>ATP</name>
        <dbReference type="ChEBI" id="CHEBI:30616"/>
    </ligand>
</feature>
<dbReference type="EC" id="4.1.1.49" evidence="1"/>
<dbReference type="EMBL" id="CP000786">
    <property type="protein sequence ID" value="ABZ99056.1"/>
    <property type="molecule type" value="Genomic_DNA"/>
</dbReference>
<dbReference type="RefSeq" id="WP_012389914.1">
    <property type="nucleotide sequence ID" value="NC_010602.1"/>
</dbReference>
<dbReference type="SMR" id="B0SPF0"/>
<dbReference type="STRING" id="456481.LEPBI_I2989"/>
<dbReference type="KEGG" id="lbi:LEPBI_I2989"/>
<dbReference type="HOGENOM" id="CLU_018247_0_1_12"/>
<dbReference type="OrthoDB" id="9806325at2"/>
<dbReference type="BioCyc" id="LBIF456481:LEPBI_RS14640-MONOMER"/>
<dbReference type="UniPathway" id="UPA00138"/>
<dbReference type="Proteomes" id="UP000001847">
    <property type="component" value="Chromosome I"/>
</dbReference>
<dbReference type="GO" id="GO:0005829">
    <property type="term" value="C:cytosol"/>
    <property type="evidence" value="ECO:0007669"/>
    <property type="project" value="TreeGrafter"/>
</dbReference>
<dbReference type="GO" id="GO:0005524">
    <property type="term" value="F:ATP binding"/>
    <property type="evidence" value="ECO:0007669"/>
    <property type="project" value="UniProtKB-UniRule"/>
</dbReference>
<dbReference type="GO" id="GO:0046872">
    <property type="term" value="F:metal ion binding"/>
    <property type="evidence" value="ECO:0007669"/>
    <property type="project" value="UniProtKB-KW"/>
</dbReference>
<dbReference type="GO" id="GO:0004612">
    <property type="term" value="F:phosphoenolpyruvate carboxykinase (ATP) activity"/>
    <property type="evidence" value="ECO:0007669"/>
    <property type="project" value="UniProtKB-UniRule"/>
</dbReference>
<dbReference type="GO" id="GO:0006094">
    <property type="term" value="P:gluconeogenesis"/>
    <property type="evidence" value="ECO:0007669"/>
    <property type="project" value="UniProtKB-UniRule"/>
</dbReference>
<dbReference type="CDD" id="cd00484">
    <property type="entry name" value="PEPCK_ATP"/>
    <property type="match status" value="1"/>
</dbReference>
<dbReference type="FunFam" id="2.170.8.10:FF:000001">
    <property type="entry name" value="Phosphoenolpyruvate carboxykinase (ATP)"/>
    <property type="match status" value="1"/>
</dbReference>
<dbReference type="FunFam" id="3.40.449.10:FF:000001">
    <property type="entry name" value="Phosphoenolpyruvate carboxykinase (ATP)"/>
    <property type="match status" value="1"/>
</dbReference>
<dbReference type="Gene3D" id="3.90.228.20">
    <property type="match status" value="1"/>
</dbReference>
<dbReference type="Gene3D" id="3.40.449.10">
    <property type="entry name" value="Phosphoenolpyruvate Carboxykinase, domain 1"/>
    <property type="match status" value="1"/>
</dbReference>
<dbReference type="Gene3D" id="2.170.8.10">
    <property type="entry name" value="Phosphoenolpyruvate Carboxykinase, domain 2"/>
    <property type="match status" value="1"/>
</dbReference>
<dbReference type="HAMAP" id="MF_00453">
    <property type="entry name" value="PEPCK_ATP"/>
    <property type="match status" value="1"/>
</dbReference>
<dbReference type="InterPro" id="IPR001272">
    <property type="entry name" value="PEP_carboxykinase_ATP"/>
</dbReference>
<dbReference type="InterPro" id="IPR013035">
    <property type="entry name" value="PEP_carboxykinase_C"/>
</dbReference>
<dbReference type="InterPro" id="IPR008210">
    <property type="entry name" value="PEP_carboxykinase_N"/>
</dbReference>
<dbReference type="InterPro" id="IPR015994">
    <property type="entry name" value="PEPCK_ATP_CS"/>
</dbReference>
<dbReference type="NCBIfam" id="TIGR00224">
    <property type="entry name" value="pckA"/>
    <property type="match status" value="1"/>
</dbReference>
<dbReference type="NCBIfam" id="NF006819">
    <property type="entry name" value="PRK09344.1-1"/>
    <property type="match status" value="1"/>
</dbReference>
<dbReference type="NCBIfam" id="NF006820">
    <property type="entry name" value="PRK09344.1-2"/>
    <property type="match status" value="1"/>
</dbReference>
<dbReference type="NCBIfam" id="NF006821">
    <property type="entry name" value="PRK09344.1-3"/>
    <property type="match status" value="1"/>
</dbReference>
<dbReference type="PANTHER" id="PTHR30031:SF0">
    <property type="entry name" value="PHOSPHOENOLPYRUVATE CARBOXYKINASE (ATP)"/>
    <property type="match status" value="1"/>
</dbReference>
<dbReference type="PANTHER" id="PTHR30031">
    <property type="entry name" value="PHOSPHOENOLPYRUVATE CARBOXYKINASE ATP"/>
    <property type="match status" value="1"/>
</dbReference>
<dbReference type="Pfam" id="PF01293">
    <property type="entry name" value="PEPCK_ATP"/>
    <property type="match status" value="1"/>
</dbReference>
<dbReference type="PIRSF" id="PIRSF006294">
    <property type="entry name" value="PEP_crbxkin"/>
    <property type="match status" value="1"/>
</dbReference>
<dbReference type="SUPFAM" id="SSF68923">
    <property type="entry name" value="PEP carboxykinase N-terminal domain"/>
    <property type="match status" value="1"/>
</dbReference>
<dbReference type="SUPFAM" id="SSF53795">
    <property type="entry name" value="PEP carboxykinase-like"/>
    <property type="match status" value="1"/>
</dbReference>
<dbReference type="PROSITE" id="PS00532">
    <property type="entry name" value="PEPCK_ATP"/>
    <property type="match status" value="1"/>
</dbReference>
<evidence type="ECO:0000255" key="1">
    <source>
        <dbReference type="HAMAP-Rule" id="MF_00453"/>
    </source>
</evidence>
<accession>B0SPF0</accession>
<comment type="function">
    <text evidence="1">Involved in the gluconeogenesis. Catalyzes the conversion of oxaloacetate (OAA) to phosphoenolpyruvate (PEP) through direct phosphoryl transfer between the nucleoside triphosphate and OAA.</text>
</comment>
<comment type="catalytic activity">
    <reaction evidence="1">
        <text>oxaloacetate + ATP = phosphoenolpyruvate + ADP + CO2</text>
        <dbReference type="Rhea" id="RHEA:18617"/>
        <dbReference type="ChEBI" id="CHEBI:16452"/>
        <dbReference type="ChEBI" id="CHEBI:16526"/>
        <dbReference type="ChEBI" id="CHEBI:30616"/>
        <dbReference type="ChEBI" id="CHEBI:58702"/>
        <dbReference type="ChEBI" id="CHEBI:456216"/>
        <dbReference type="EC" id="4.1.1.49"/>
    </reaction>
</comment>
<comment type="cofactor">
    <cofactor evidence="1">
        <name>Mn(2+)</name>
        <dbReference type="ChEBI" id="CHEBI:29035"/>
    </cofactor>
    <text evidence="1">Binds 1 Mn(2+) ion per subunit.</text>
</comment>
<comment type="pathway">
    <text evidence="1">Carbohydrate biosynthesis; gluconeogenesis.</text>
</comment>
<comment type="subcellular location">
    <subcellularLocation>
        <location evidence="1">Cytoplasm</location>
    </subcellularLocation>
</comment>
<comment type="similarity">
    <text evidence="1">Belongs to the phosphoenolpyruvate carboxykinase (ATP) family.</text>
</comment>
<keyword id="KW-0067">ATP-binding</keyword>
<keyword id="KW-0963">Cytoplasm</keyword>
<keyword id="KW-0210">Decarboxylase</keyword>
<keyword id="KW-0312">Gluconeogenesis</keyword>
<keyword id="KW-0456">Lyase</keyword>
<keyword id="KW-0464">Manganese</keyword>
<keyword id="KW-0479">Metal-binding</keyword>
<keyword id="KW-0547">Nucleotide-binding</keyword>
<keyword id="KW-1185">Reference proteome</keyword>
<proteinExistence type="inferred from homology"/>